<feature type="chain" id="PRO_1000192842" description="Phosphoglycerate kinase">
    <location>
        <begin position="1"/>
        <end position="399"/>
    </location>
</feature>
<feature type="binding site" evidence="1">
    <location>
        <begin position="22"/>
        <end position="24"/>
    </location>
    <ligand>
        <name>substrate</name>
    </ligand>
</feature>
<feature type="binding site" evidence="1">
    <location>
        <position position="37"/>
    </location>
    <ligand>
        <name>substrate</name>
    </ligand>
</feature>
<feature type="binding site" evidence="1">
    <location>
        <begin position="60"/>
        <end position="63"/>
    </location>
    <ligand>
        <name>substrate</name>
    </ligand>
</feature>
<feature type="binding site" evidence="1">
    <location>
        <position position="119"/>
    </location>
    <ligand>
        <name>substrate</name>
    </ligand>
</feature>
<feature type="binding site" evidence="1">
    <location>
        <position position="152"/>
    </location>
    <ligand>
        <name>substrate</name>
    </ligand>
</feature>
<feature type="binding site" evidence="1">
    <location>
        <position position="202"/>
    </location>
    <ligand>
        <name>ATP</name>
        <dbReference type="ChEBI" id="CHEBI:30616"/>
    </ligand>
</feature>
<feature type="binding site" evidence="1">
    <location>
        <position position="324"/>
    </location>
    <ligand>
        <name>ATP</name>
        <dbReference type="ChEBI" id="CHEBI:30616"/>
    </ligand>
</feature>
<feature type="binding site" evidence="1">
    <location>
        <begin position="354"/>
        <end position="357"/>
    </location>
    <ligand>
        <name>ATP</name>
        <dbReference type="ChEBI" id="CHEBI:30616"/>
    </ligand>
</feature>
<keyword id="KW-0067">ATP-binding</keyword>
<keyword id="KW-0963">Cytoplasm</keyword>
<keyword id="KW-0324">Glycolysis</keyword>
<keyword id="KW-0418">Kinase</keyword>
<keyword id="KW-0547">Nucleotide-binding</keyword>
<keyword id="KW-1185">Reference proteome</keyword>
<keyword id="KW-0808">Transferase</keyword>
<organism>
    <name type="scientific">Sinorhizobium fredii (strain NBRC 101917 / NGR234)</name>
    <dbReference type="NCBI Taxonomy" id="394"/>
    <lineage>
        <taxon>Bacteria</taxon>
        <taxon>Pseudomonadati</taxon>
        <taxon>Pseudomonadota</taxon>
        <taxon>Alphaproteobacteria</taxon>
        <taxon>Hyphomicrobiales</taxon>
        <taxon>Rhizobiaceae</taxon>
        <taxon>Sinorhizobium/Ensifer group</taxon>
        <taxon>Sinorhizobium</taxon>
    </lineage>
</organism>
<protein>
    <recommendedName>
        <fullName evidence="1">Phosphoglycerate kinase</fullName>
        <ecNumber evidence="1">2.7.2.3</ecNumber>
    </recommendedName>
</protein>
<sequence length="399" mass="41721">MTFKTLDDLTDIAGKRVLVRVDLNVPVKDGQVTDTTRIERVAPTIRELSEKGAKIILLAHFGRPKGEPVADMSLKAIAPAVEEILDQRVHFAADCIGDKAANAIAEMNDGDVLLLENTRFHKGEEKNDPAFVTALAANGDLYVNDAFSAAHRAHASTEGLAQHLPAYAGRTMQAELEALEKGLGNPKRPVVAIVGGAKVSTKIDLLQNLVKKVDALVIGGGMANTFLAAQGVDVGKSLCEHDLAETAKSIIAAAAAAGCAIVLPEDGVVAREFKAGADNAVVDIKAIPADAMVLDVGPKSVAAINDWISRAETLVWNGPLGAFEIAPFDKATVAAAKHAAARTRQGSLVSVAGGGDTVAALNHAEVADDFTYVSTAGGAFLEWMEGKPLPGVDILHKQK</sequence>
<accession>C3MIJ2</accession>
<name>PGK_SINFN</name>
<evidence type="ECO:0000255" key="1">
    <source>
        <dbReference type="HAMAP-Rule" id="MF_00145"/>
    </source>
</evidence>
<proteinExistence type="inferred from homology"/>
<reference key="1">
    <citation type="journal article" date="2009" name="Appl. Environ. Microbiol.">
        <title>Rhizobium sp. strain NGR234 possesses a remarkable number of secretion systems.</title>
        <authorList>
            <person name="Schmeisser C."/>
            <person name="Liesegang H."/>
            <person name="Krysciak D."/>
            <person name="Bakkou N."/>
            <person name="Le Quere A."/>
            <person name="Wollherr A."/>
            <person name="Heinemeyer I."/>
            <person name="Morgenstern B."/>
            <person name="Pommerening-Roeser A."/>
            <person name="Flores M."/>
            <person name="Palacios R."/>
            <person name="Brenner S."/>
            <person name="Gottschalk G."/>
            <person name="Schmitz R.A."/>
            <person name="Broughton W.J."/>
            <person name="Perret X."/>
            <person name="Strittmatter A.W."/>
            <person name="Streit W.R."/>
        </authorList>
    </citation>
    <scope>NUCLEOTIDE SEQUENCE [LARGE SCALE GENOMIC DNA]</scope>
    <source>
        <strain>NBRC 101917 / NGR234</strain>
    </source>
</reference>
<comment type="catalytic activity">
    <reaction evidence="1">
        <text>(2R)-3-phosphoglycerate + ATP = (2R)-3-phospho-glyceroyl phosphate + ADP</text>
        <dbReference type="Rhea" id="RHEA:14801"/>
        <dbReference type="ChEBI" id="CHEBI:30616"/>
        <dbReference type="ChEBI" id="CHEBI:57604"/>
        <dbReference type="ChEBI" id="CHEBI:58272"/>
        <dbReference type="ChEBI" id="CHEBI:456216"/>
        <dbReference type="EC" id="2.7.2.3"/>
    </reaction>
</comment>
<comment type="pathway">
    <text evidence="1">Carbohydrate degradation; glycolysis; pyruvate from D-glyceraldehyde 3-phosphate: step 2/5.</text>
</comment>
<comment type="subunit">
    <text evidence="1">Monomer.</text>
</comment>
<comment type="subcellular location">
    <subcellularLocation>
        <location evidence="1">Cytoplasm</location>
    </subcellularLocation>
</comment>
<comment type="similarity">
    <text evidence="1">Belongs to the phosphoglycerate kinase family.</text>
</comment>
<gene>
    <name evidence="1" type="primary">pgk</name>
    <name type="ordered locus">NGR_c28090</name>
</gene>
<dbReference type="EC" id="2.7.2.3" evidence="1"/>
<dbReference type="EMBL" id="CP001389">
    <property type="protein sequence ID" value="ACP26555.1"/>
    <property type="molecule type" value="Genomic_DNA"/>
</dbReference>
<dbReference type="RefSeq" id="WP_012709311.1">
    <property type="nucleotide sequence ID" value="NC_012587.1"/>
</dbReference>
<dbReference type="RefSeq" id="YP_002827308.1">
    <property type="nucleotide sequence ID" value="NC_012587.1"/>
</dbReference>
<dbReference type="SMR" id="C3MIJ2"/>
<dbReference type="STRING" id="394.NGR_c28090"/>
<dbReference type="KEGG" id="rhi:NGR_c28090"/>
<dbReference type="PATRIC" id="fig|394.7.peg.5644"/>
<dbReference type="eggNOG" id="COG0126">
    <property type="taxonomic scope" value="Bacteria"/>
</dbReference>
<dbReference type="HOGENOM" id="CLU_025427_0_2_5"/>
<dbReference type="OrthoDB" id="9808460at2"/>
<dbReference type="UniPathway" id="UPA00109">
    <property type="reaction ID" value="UER00185"/>
</dbReference>
<dbReference type="Proteomes" id="UP000001054">
    <property type="component" value="Chromosome"/>
</dbReference>
<dbReference type="GO" id="GO:0005829">
    <property type="term" value="C:cytosol"/>
    <property type="evidence" value="ECO:0007669"/>
    <property type="project" value="TreeGrafter"/>
</dbReference>
<dbReference type="GO" id="GO:0043531">
    <property type="term" value="F:ADP binding"/>
    <property type="evidence" value="ECO:0007669"/>
    <property type="project" value="TreeGrafter"/>
</dbReference>
<dbReference type="GO" id="GO:0005524">
    <property type="term" value="F:ATP binding"/>
    <property type="evidence" value="ECO:0007669"/>
    <property type="project" value="UniProtKB-KW"/>
</dbReference>
<dbReference type="GO" id="GO:0004618">
    <property type="term" value="F:phosphoglycerate kinase activity"/>
    <property type="evidence" value="ECO:0007669"/>
    <property type="project" value="UniProtKB-UniRule"/>
</dbReference>
<dbReference type="GO" id="GO:0006094">
    <property type="term" value="P:gluconeogenesis"/>
    <property type="evidence" value="ECO:0007669"/>
    <property type="project" value="TreeGrafter"/>
</dbReference>
<dbReference type="GO" id="GO:0006096">
    <property type="term" value="P:glycolytic process"/>
    <property type="evidence" value="ECO:0007669"/>
    <property type="project" value="UniProtKB-UniRule"/>
</dbReference>
<dbReference type="FunFam" id="3.40.50.1260:FF:000006">
    <property type="entry name" value="Phosphoglycerate kinase"/>
    <property type="match status" value="1"/>
</dbReference>
<dbReference type="FunFam" id="3.40.50.1260:FF:000031">
    <property type="entry name" value="Phosphoglycerate kinase 1"/>
    <property type="match status" value="1"/>
</dbReference>
<dbReference type="Gene3D" id="3.40.50.1260">
    <property type="entry name" value="Phosphoglycerate kinase, N-terminal domain"/>
    <property type="match status" value="2"/>
</dbReference>
<dbReference type="HAMAP" id="MF_00145">
    <property type="entry name" value="Phosphoglyc_kinase"/>
    <property type="match status" value="1"/>
</dbReference>
<dbReference type="InterPro" id="IPR001576">
    <property type="entry name" value="Phosphoglycerate_kinase"/>
</dbReference>
<dbReference type="InterPro" id="IPR015911">
    <property type="entry name" value="Phosphoglycerate_kinase_CS"/>
</dbReference>
<dbReference type="InterPro" id="IPR015824">
    <property type="entry name" value="Phosphoglycerate_kinase_N"/>
</dbReference>
<dbReference type="InterPro" id="IPR036043">
    <property type="entry name" value="Phosphoglycerate_kinase_sf"/>
</dbReference>
<dbReference type="PANTHER" id="PTHR11406">
    <property type="entry name" value="PHOSPHOGLYCERATE KINASE"/>
    <property type="match status" value="1"/>
</dbReference>
<dbReference type="PANTHER" id="PTHR11406:SF23">
    <property type="entry name" value="PHOSPHOGLYCERATE KINASE 1, CHLOROPLASTIC-RELATED"/>
    <property type="match status" value="1"/>
</dbReference>
<dbReference type="Pfam" id="PF00162">
    <property type="entry name" value="PGK"/>
    <property type="match status" value="1"/>
</dbReference>
<dbReference type="PIRSF" id="PIRSF000724">
    <property type="entry name" value="Pgk"/>
    <property type="match status" value="1"/>
</dbReference>
<dbReference type="PRINTS" id="PR00477">
    <property type="entry name" value="PHGLYCKINASE"/>
</dbReference>
<dbReference type="SUPFAM" id="SSF53748">
    <property type="entry name" value="Phosphoglycerate kinase"/>
    <property type="match status" value="1"/>
</dbReference>
<dbReference type="PROSITE" id="PS00111">
    <property type="entry name" value="PGLYCERATE_KINASE"/>
    <property type="match status" value="1"/>
</dbReference>